<accession>Q6YFE4</accession>
<gene>
    <name type="primary">GRX5</name>
    <name type="synonym">GRX1</name>
    <name type="synonym">PYD1-B</name>
</gene>
<comment type="function">
    <text evidence="1">Monothiol glutaredoxin involved in mitochondrial iron-sulfur (Fe/S) cluster transfer (By similarity). Receives iron-sulfur clusters from scaffold protein ISU1 and mediates their transfer to apoproteins, to the 4Fe/FS cluster biosynthesis machinery, or export from mitochondrion (By similarity).</text>
</comment>
<comment type="subunit">
    <text evidence="2">Homodimer.</text>
</comment>
<comment type="subcellular location">
    <subcellularLocation>
        <location evidence="1">Mitochondrion matrix</location>
    </subcellularLocation>
</comment>
<comment type="similarity">
    <text evidence="5">Belongs to the glutaredoxin family. Monothiol subfamily.</text>
</comment>
<keyword id="KW-0001">2Fe-2S</keyword>
<keyword id="KW-0408">Iron</keyword>
<keyword id="KW-0411">Iron-sulfur</keyword>
<keyword id="KW-0479">Metal-binding</keyword>
<keyword id="KW-0496">Mitochondrion</keyword>
<keyword id="KW-0676">Redox-active center</keyword>
<keyword id="KW-0809">Transit peptide</keyword>
<proteinExistence type="inferred from homology"/>
<feature type="transit peptide" description="Mitochondrion" evidence="3">
    <location>
        <begin position="1"/>
        <end position="28"/>
    </location>
</feature>
<feature type="chain" id="PRO_0000367268" description="Monothiol glutaredoxin-5, mitochondrial">
    <location>
        <begin position="29"/>
        <end position="143"/>
    </location>
</feature>
<feature type="domain" description="Glutaredoxin" evidence="4">
    <location>
        <begin position="33"/>
        <end position="138"/>
    </location>
</feature>
<feature type="binding site" evidence="2">
    <location>
        <position position="50"/>
    </location>
    <ligand>
        <name>glutathione</name>
        <dbReference type="ChEBI" id="CHEBI:57925"/>
    </ligand>
</feature>
<feature type="binding site" evidence="2">
    <location>
        <position position="58"/>
    </location>
    <ligand>
        <name>[2Fe-2S] cluster</name>
        <dbReference type="ChEBI" id="CHEBI:190135"/>
        <note>ligand shared between dimeric partners</note>
    </ligand>
</feature>
<feature type="binding site" evidence="2">
    <location>
        <begin position="90"/>
        <end position="94"/>
    </location>
    <ligand>
        <name>glutathione</name>
        <dbReference type="ChEBI" id="CHEBI:57925"/>
    </ligand>
</feature>
<feature type="binding site" evidence="2">
    <location>
        <position position="102"/>
    </location>
    <ligand>
        <name>glutathione</name>
        <dbReference type="ChEBI" id="CHEBI:57925"/>
    </ligand>
</feature>
<feature type="binding site" evidence="2">
    <location>
        <begin position="115"/>
        <end position="116"/>
    </location>
    <ligand>
        <name>glutathione</name>
        <dbReference type="ChEBI" id="CHEBI:57925"/>
    </ligand>
</feature>
<organism>
    <name type="scientific">Lachancea kluyveri</name>
    <name type="common">Yeast</name>
    <name type="synonym">Saccharomyces kluyveri</name>
    <dbReference type="NCBI Taxonomy" id="4934"/>
    <lineage>
        <taxon>Eukaryota</taxon>
        <taxon>Fungi</taxon>
        <taxon>Dikarya</taxon>
        <taxon>Ascomycota</taxon>
        <taxon>Saccharomycotina</taxon>
        <taxon>Saccharomycetes</taxon>
        <taxon>Saccharomycetales</taxon>
        <taxon>Saccharomycetaceae</taxon>
        <taxon>Lachancea</taxon>
    </lineage>
</organism>
<reference key="1">
    <citation type="journal article" date="2008" name="J. Mol. Biol.">
        <title>A second pathway to degrade pyrimidine nucleic acid precursors in eukaryotes.</title>
        <authorList>
            <person name="Andersen G."/>
            <person name="Bjoernberg O."/>
            <person name="Polakova S."/>
            <person name="Pynyaha Y."/>
            <person name="Rasmussen A."/>
            <person name="Moeller K."/>
            <person name="Hofer A."/>
            <person name="Moritz T."/>
            <person name="Sandrini M.P."/>
            <person name="Merico A.M."/>
            <person name="Compagno C."/>
            <person name="Aekerlund H.E."/>
            <person name="Gojkovic Z."/>
            <person name="Piskur J."/>
        </authorList>
    </citation>
    <scope>NUCLEOTIDE SEQUENCE [GENOMIC DNA]</scope>
</reference>
<protein>
    <recommendedName>
        <fullName>Monothiol glutaredoxin-5, mitochondrial</fullName>
    </recommendedName>
</protein>
<sequence>MFGRISTRALLRPAFTHRIPSVSLSRFLSTETKQAIESAIESAPVVLFMKGTPEFPQCGFSKATINMLGQQGVDPMKFAAYNVLEDAELREGVKEFSEWPTIPQLYVNKEFVGGCDIVMNMAQTGELAKLLEDADALVPEEEE</sequence>
<name>GLRX5_LACKL</name>
<dbReference type="EMBL" id="AY154655">
    <property type="protein sequence ID" value="AAO06877.1"/>
    <property type="molecule type" value="Genomic_DNA"/>
</dbReference>
<dbReference type="SMR" id="Q6YFE4"/>
<dbReference type="GO" id="GO:0005759">
    <property type="term" value="C:mitochondrial matrix"/>
    <property type="evidence" value="ECO:0007669"/>
    <property type="project" value="UniProtKB-SubCell"/>
</dbReference>
<dbReference type="GO" id="GO:0051537">
    <property type="term" value="F:2 iron, 2 sulfur cluster binding"/>
    <property type="evidence" value="ECO:0007669"/>
    <property type="project" value="UniProtKB-KW"/>
</dbReference>
<dbReference type="GO" id="GO:0015036">
    <property type="term" value="F:disulfide oxidoreductase activity"/>
    <property type="evidence" value="ECO:0007669"/>
    <property type="project" value="UniProtKB-ARBA"/>
</dbReference>
<dbReference type="GO" id="GO:0046872">
    <property type="term" value="F:metal ion binding"/>
    <property type="evidence" value="ECO:0007669"/>
    <property type="project" value="UniProtKB-KW"/>
</dbReference>
<dbReference type="CDD" id="cd03028">
    <property type="entry name" value="GRX_PICOT_like"/>
    <property type="match status" value="1"/>
</dbReference>
<dbReference type="FunFam" id="3.40.30.10:FF:000005">
    <property type="entry name" value="Glutaredoxin 5"/>
    <property type="match status" value="1"/>
</dbReference>
<dbReference type="Gene3D" id="3.40.30.10">
    <property type="entry name" value="Glutaredoxin"/>
    <property type="match status" value="1"/>
</dbReference>
<dbReference type="InterPro" id="IPR002109">
    <property type="entry name" value="Glutaredoxin"/>
</dbReference>
<dbReference type="InterPro" id="IPR033658">
    <property type="entry name" value="GRX_PICOT-like"/>
</dbReference>
<dbReference type="InterPro" id="IPR004480">
    <property type="entry name" value="Monothiol_GRX-rel"/>
</dbReference>
<dbReference type="InterPro" id="IPR036249">
    <property type="entry name" value="Thioredoxin-like_sf"/>
</dbReference>
<dbReference type="NCBIfam" id="TIGR00365">
    <property type="entry name" value="Grx4 family monothiol glutaredoxin"/>
    <property type="match status" value="1"/>
</dbReference>
<dbReference type="PANTHER" id="PTHR10293">
    <property type="entry name" value="GLUTAREDOXIN FAMILY MEMBER"/>
    <property type="match status" value="1"/>
</dbReference>
<dbReference type="PANTHER" id="PTHR10293:SF16">
    <property type="entry name" value="GLUTAREDOXIN-RELATED PROTEIN 5, MITOCHONDRIAL"/>
    <property type="match status" value="1"/>
</dbReference>
<dbReference type="Pfam" id="PF00462">
    <property type="entry name" value="Glutaredoxin"/>
    <property type="match status" value="1"/>
</dbReference>
<dbReference type="SUPFAM" id="SSF52833">
    <property type="entry name" value="Thioredoxin-like"/>
    <property type="match status" value="1"/>
</dbReference>
<dbReference type="PROSITE" id="PS51354">
    <property type="entry name" value="GLUTAREDOXIN_2"/>
    <property type="match status" value="1"/>
</dbReference>
<evidence type="ECO:0000250" key="1">
    <source>
        <dbReference type="UniProtKB" id="Q02784"/>
    </source>
</evidence>
<evidence type="ECO:0000250" key="2">
    <source>
        <dbReference type="UniProtKB" id="Q86SX6"/>
    </source>
</evidence>
<evidence type="ECO:0000255" key="3"/>
<evidence type="ECO:0000255" key="4">
    <source>
        <dbReference type="PROSITE-ProRule" id="PRU00686"/>
    </source>
</evidence>
<evidence type="ECO:0000305" key="5"/>